<name>APT_MYCSK</name>
<reference key="1">
    <citation type="submission" date="2006-12" db="EMBL/GenBank/DDBJ databases">
        <title>Complete sequence of chromosome of Mycobacterium sp. KMS.</title>
        <authorList>
            <consortium name="US DOE Joint Genome Institute"/>
            <person name="Copeland A."/>
            <person name="Lucas S."/>
            <person name="Lapidus A."/>
            <person name="Barry K."/>
            <person name="Detter J.C."/>
            <person name="Glavina del Rio T."/>
            <person name="Hammon N."/>
            <person name="Israni S."/>
            <person name="Dalin E."/>
            <person name="Tice H."/>
            <person name="Pitluck S."/>
            <person name="Kiss H."/>
            <person name="Brettin T."/>
            <person name="Bruce D."/>
            <person name="Han C."/>
            <person name="Tapia R."/>
            <person name="Gilna P."/>
            <person name="Schmutz J."/>
            <person name="Larimer F."/>
            <person name="Land M."/>
            <person name="Hauser L."/>
            <person name="Kyrpides N."/>
            <person name="Mikhailova N."/>
            <person name="Miller C.D."/>
            <person name="Richardson P."/>
        </authorList>
    </citation>
    <scope>NUCLEOTIDE SEQUENCE [LARGE SCALE GENOMIC DNA]</scope>
    <source>
        <strain>KMS</strain>
    </source>
</reference>
<proteinExistence type="inferred from homology"/>
<evidence type="ECO:0000255" key="1">
    <source>
        <dbReference type="HAMAP-Rule" id="MF_00004"/>
    </source>
</evidence>
<gene>
    <name evidence="1" type="primary">apt</name>
    <name type="ordered locus">Mkms_2326</name>
</gene>
<dbReference type="EC" id="2.4.2.7" evidence="1"/>
<dbReference type="EMBL" id="CP000518">
    <property type="protein sequence ID" value="ABL91524.1"/>
    <property type="molecule type" value="Genomic_DNA"/>
</dbReference>
<dbReference type="SMR" id="A1UFB6"/>
<dbReference type="STRING" id="189918.Mkms_2326"/>
<dbReference type="KEGG" id="mkm:Mkms_2326"/>
<dbReference type="HOGENOM" id="CLU_063339_3_3_11"/>
<dbReference type="OrthoDB" id="9803963at2"/>
<dbReference type="UniPathway" id="UPA00588">
    <property type="reaction ID" value="UER00646"/>
</dbReference>
<dbReference type="GO" id="GO:0005737">
    <property type="term" value="C:cytoplasm"/>
    <property type="evidence" value="ECO:0007669"/>
    <property type="project" value="UniProtKB-SubCell"/>
</dbReference>
<dbReference type="GO" id="GO:0002055">
    <property type="term" value="F:adenine binding"/>
    <property type="evidence" value="ECO:0007669"/>
    <property type="project" value="TreeGrafter"/>
</dbReference>
<dbReference type="GO" id="GO:0003999">
    <property type="term" value="F:adenine phosphoribosyltransferase activity"/>
    <property type="evidence" value="ECO:0007669"/>
    <property type="project" value="UniProtKB-UniRule"/>
</dbReference>
<dbReference type="GO" id="GO:0016208">
    <property type="term" value="F:AMP binding"/>
    <property type="evidence" value="ECO:0007669"/>
    <property type="project" value="TreeGrafter"/>
</dbReference>
<dbReference type="GO" id="GO:0006168">
    <property type="term" value="P:adenine salvage"/>
    <property type="evidence" value="ECO:0007669"/>
    <property type="project" value="InterPro"/>
</dbReference>
<dbReference type="GO" id="GO:0044209">
    <property type="term" value="P:AMP salvage"/>
    <property type="evidence" value="ECO:0007669"/>
    <property type="project" value="UniProtKB-UniRule"/>
</dbReference>
<dbReference type="GO" id="GO:0006166">
    <property type="term" value="P:purine ribonucleoside salvage"/>
    <property type="evidence" value="ECO:0007669"/>
    <property type="project" value="UniProtKB-KW"/>
</dbReference>
<dbReference type="CDD" id="cd06223">
    <property type="entry name" value="PRTases_typeI"/>
    <property type="match status" value="1"/>
</dbReference>
<dbReference type="FunFam" id="3.40.50.2020:FF:000021">
    <property type="entry name" value="Adenine phosphoribosyltransferase"/>
    <property type="match status" value="1"/>
</dbReference>
<dbReference type="Gene3D" id="3.40.50.2020">
    <property type="match status" value="1"/>
</dbReference>
<dbReference type="HAMAP" id="MF_00004">
    <property type="entry name" value="Aden_phosphoribosyltr"/>
    <property type="match status" value="1"/>
</dbReference>
<dbReference type="InterPro" id="IPR005764">
    <property type="entry name" value="Ade_phspho_trans"/>
</dbReference>
<dbReference type="InterPro" id="IPR000836">
    <property type="entry name" value="PRibTrfase_dom"/>
</dbReference>
<dbReference type="InterPro" id="IPR029057">
    <property type="entry name" value="PRTase-like"/>
</dbReference>
<dbReference type="InterPro" id="IPR050054">
    <property type="entry name" value="UPRTase/APRTase"/>
</dbReference>
<dbReference type="NCBIfam" id="NF002634">
    <property type="entry name" value="PRK02304.1-3"/>
    <property type="match status" value="1"/>
</dbReference>
<dbReference type="NCBIfam" id="NF002636">
    <property type="entry name" value="PRK02304.1-5"/>
    <property type="match status" value="1"/>
</dbReference>
<dbReference type="PANTHER" id="PTHR32315">
    <property type="entry name" value="ADENINE PHOSPHORIBOSYLTRANSFERASE"/>
    <property type="match status" value="1"/>
</dbReference>
<dbReference type="PANTHER" id="PTHR32315:SF3">
    <property type="entry name" value="ADENINE PHOSPHORIBOSYLTRANSFERASE"/>
    <property type="match status" value="1"/>
</dbReference>
<dbReference type="Pfam" id="PF00156">
    <property type="entry name" value="Pribosyltran"/>
    <property type="match status" value="1"/>
</dbReference>
<dbReference type="SUPFAM" id="SSF53271">
    <property type="entry name" value="PRTase-like"/>
    <property type="match status" value="1"/>
</dbReference>
<dbReference type="PROSITE" id="PS00103">
    <property type="entry name" value="PUR_PYR_PR_TRANSFER"/>
    <property type="match status" value="1"/>
</dbReference>
<accession>A1UFB6</accession>
<organism>
    <name type="scientific">Mycobacterium sp. (strain KMS)</name>
    <dbReference type="NCBI Taxonomy" id="189918"/>
    <lineage>
        <taxon>Bacteria</taxon>
        <taxon>Bacillati</taxon>
        <taxon>Actinomycetota</taxon>
        <taxon>Actinomycetes</taxon>
        <taxon>Mycobacteriales</taxon>
        <taxon>Mycobacteriaceae</taxon>
        <taxon>Mycobacterium</taxon>
    </lineage>
</organism>
<sequence>MTDISKVIASLMREVPDFPEPGIQFKDLTPLLADAEGLMAVTDALAATAEGADLVAGIDARGFLLGAAVALRLGTGVLAVRKGGKLPPPVHSQTYNLEYGSATLEIPADGLDIAGRSVVIIDDVLATGGTVAATHRLLTSGGATVLHAAVVLELTALGGREVVQPLSVSSLYTV</sequence>
<protein>
    <recommendedName>
        <fullName evidence="1">Adenine phosphoribosyltransferase</fullName>
        <shortName evidence="1">APRT</shortName>
        <ecNumber evidence="1">2.4.2.7</ecNumber>
    </recommendedName>
</protein>
<comment type="function">
    <text evidence="1">Catalyzes a salvage reaction resulting in the formation of AMP, that is energically less costly than de novo synthesis.</text>
</comment>
<comment type="catalytic activity">
    <reaction evidence="1">
        <text>AMP + diphosphate = 5-phospho-alpha-D-ribose 1-diphosphate + adenine</text>
        <dbReference type="Rhea" id="RHEA:16609"/>
        <dbReference type="ChEBI" id="CHEBI:16708"/>
        <dbReference type="ChEBI" id="CHEBI:33019"/>
        <dbReference type="ChEBI" id="CHEBI:58017"/>
        <dbReference type="ChEBI" id="CHEBI:456215"/>
        <dbReference type="EC" id="2.4.2.7"/>
    </reaction>
</comment>
<comment type="pathway">
    <text evidence="1">Purine metabolism; AMP biosynthesis via salvage pathway; AMP from adenine: step 1/1.</text>
</comment>
<comment type="subunit">
    <text evidence="1">Homodimer.</text>
</comment>
<comment type="subcellular location">
    <subcellularLocation>
        <location evidence="1">Cytoplasm</location>
    </subcellularLocation>
</comment>
<comment type="similarity">
    <text evidence="1">Belongs to the purine/pyrimidine phosphoribosyltransferase family.</text>
</comment>
<feature type="chain" id="PRO_0000329359" description="Adenine phosphoribosyltransferase">
    <location>
        <begin position="1"/>
        <end position="174"/>
    </location>
</feature>
<keyword id="KW-0963">Cytoplasm</keyword>
<keyword id="KW-0328">Glycosyltransferase</keyword>
<keyword id="KW-0660">Purine salvage</keyword>
<keyword id="KW-0808">Transferase</keyword>